<dbReference type="EC" id="3.5.3.12" evidence="2"/>
<dbReference type="EMBL" id="CM001220">
    <property type="protein sequence ID" value="AES91372.2"/>
    <property type="molecule type" value="Genomic_DNA"/>
</dbReference>
<dbReference type="EMBL" id="PSQE01000004">
    <property type="protein sequence ID" value="RHN63774.1"/>
    <property type="molecule type" value="Genomic_DNA"/>
</dbReference>
<dbReference type="EMBL" id="BT051738">
    <property type="protein sequence ID" value="ACJ84400.1"/>
    <property type="molecule type" value="mRNA"/>
</dbReference>
<dbReference type="EMBL" id="BT134342">
    <property type="protein sequence ID" value="AFK34137.1"/>
    <property type="molecule type" value="mRNA"/>
</dbReference>
<dbReference type="RefSeq" id="XP_003609175.2">
    <property type="nucleotide sequence ID" value="XM_003609127.2"/>
</dbReference>
<dbReference type="PDB" id="6NIB">
    <property type="method" value="X-ray"/>
    <property type="resolution" value="1.20 A"/>
    <property type="chains" value="A=11-374"/>
</dbReference>
<dbReference type="PDB" id="6NIC">
    <property type="method" value="X-ray"/>
    <property type="resolution" value="2.20 A"/>
    <property type="chains" value="A/B/C/D=11-374"/>
</dbReference>
<dbReference type="PDBsum" id="6NIB"/>
<dbReference type="PDBsum" id="6NIC"/>
<dbReference type="SMR" id="G7JT50"/>
<dbReference type="STRING" id="3880.G7JT50"/>
<dbReference type="PaxDb" id="3880-AES91372"/>
<dbReference type="EnsemblPlants" id="rna26518">
    <property type="protein sequence ID" value="RHN63774.1"/>
    <property type="gene ID" value="gene26518"/>
</dbReference>
<dbReference type="GeneID" id="11445422"/>
<dbReference type="Gramene" id="rna26518">
    <property type="protein sequence ID" value="RHN63774.1"/>
    <property type="gene ID" value="gene26518"/>
</dbReference>
<dbReference type="KEGG" id="mtr:11445422"/>
<dbReference type="eggNOG" id="ENOG502QUHM">
    <property type="taxonomic scope" value="Eukaryota"/>
</dbReference>
<dbReference type="HOGENOM" id="CLU_037682_1_0_1"/>
<dbReference type="OrthoDB" id="544103at2759"/>
<dbReference type="UniPathway" id="UPA00534">
    <property type="reaction ID" value="UER00285"/>
</dbReference>
<dbReference type="Proteomes" id="UP000002051">
    <property type="component" value="Chromosome 4"/>
</dbReference>
<dbReference type="Proteomes" id="UP000265566">
    <property type="component" value="Chromosome 4"/>
</dbReference>
<dbReference type="ExpressionAtlas" id="G7JT50">
    <property type="expression patterns" value="differential"/>
</dbReference>
<dbReference type="GO" id="GO:0047632">
    <property type="term" value="F:agmatine deiminase activity"/>
    <property type="evidence" value="ECO:0007669"/>
    <property type="project" value="UniProtKB-EC"/>
</dbReference>
<dbReference type="GO" id="GO:0004668">
    <property type="term" value="F:protein-arginine deiminase activity"/>
    <property type="evidence" value="ECO:0007669"/>
    <property type="project" value="InterPro"/>
</dbReference>
<dbReference type="GO" id="GO:0033388">
    <property type="term" value="P:putrescine biosynthetic process from arginine"/>
    <property type="evidence" value="ECO:0007669"/>
    <property type="project" value="UniProtKB-UniPathway"/>
</dbReference>
<dbReference type="Gene3D" id="3.75.10.10">
    <property type="entry name" value="L-arginine/glycine Amidinotransferase, Chain A"/>
    <property type="match status" value="1"/>
</dbReference>
<dbReference type="HAMAP" id="MF_01841">
    <property type="entry name" value="Agmatine_deimin"/>
    <property type="match status" value="1"/>
</dbReference>
<dbReference type="InterPro" id="IPR017754">
    <property type="entry name" value="Agmatine_deiminase"/>
</dbReference>
<dbReference type="InterPro" id="IPR007466">
    <property type="entry name" value="Peptidyl-Arg-deiminase_porph"/>
</dbReference>
<dbReference type="NCBIfam" id="TIGR03380">
    <property type="entry name" value="agmatine_aguA"/>
    <property type="match status" value="1"/>
</dbReference>
<dbReference type="NCBIfam" id="NF010070">
    <property type="entry name" value="PRK13551.1"/>
    <property type="match status" value="1"/>
</dbReference>
<dbReference type="PANTHER" id="PTHR31377:SF2">
    <property type="entry name" value="AGMATINE DEIMINASE"/>
    <property type="match status" value="1"/>
</dbReference>
<dbReference type="PANTHER" id="PTHR31377">
    <property type="entry name" value="AGMATINE DEIMINASE-RELATED"/>
    <property type="match status" value="1"/>
</dbReference>
<dbReference type="Pfam" id="PF04371">
    <property type="entry name" value="PAD_porph"/>
    <property type="match status" value="1"/>
</dbReference>
<dbReference type="SUPFAM" id="SSF55909">
    <property type="entry name" value="Pentein"/>
    <property type="match status" value="1"/>
</dbReference>
<name>AGUA_MEDTR</name>
<evidence type="ECO:0000250" key="1">
    <source>
        <dbReference type="UniProtKB" id="Q837U5"/>
    </source>
</evidence>
<evidence type="ECO:0000250" key="2">
    <source>
        <dbReference type="UniProtKB" id="Q8GWW7"/>
    </source>
</evidence>
<evidence type="ECO:0000269" key="3">
    <source>
    </source>
</evidence>
<evidence type="ECO:0000303" key="4">
    <source>
    </source>
</evidence>
<evidence type="ECO:0000305" key="5"/>
<evidence type="ECO:0000312" key="6">
    <source>
        <dbReference type="EMBL" id="AES91372.2"/>
    </source>
</evidence>
<evidence type="ECO:0000312" key="7">
    <source>
        <dbReference type="EMBL" id="RHN63774.1"/>
    </source>
</evidence>
<evidence type="ECO:0007744" key="8">
    <source>
        <dbReference type="PDB" id="6NIC"/>
    </source>
</evidence>
<evidence type="ECO:0007829" key="9">
    <source>
        <dbReference type="PDB" id="6NIB"/>
    </source>
</evidence>
<evidence type="ECO:0007829" key="10">
    <source>
        <dbReference type="PDB" id="6NIC"/>
    </source>
</evidence>
<gene>
    <name evidence="4" type="primary">AIH</name>
    <name evidence="6" type="ordered locus">MTR_4g112810</name>
    <name evidence="7" type="ORF">MtrunA17_Chr4g0061951</name>
</gene>
<organism>
    <name type="scientific">Medicago truncatula</name>
    <name type="common">Barrel medic</name>
    <name type="synonym">Medicago tribuloides</name>
    <dbReference type="NCBI Taxonomy" id="3880"/>
    <lineage>
        <taxon>Eukaryota</taxon>
        <taxon>Viridiplantae</taxon>
        <taxon>Streptophyta</taxon>
        <taxon>Embryophyta</taxon>
        <taxon>Tracheophyta</taxon>
        <taxon>Spermatophyta</taxon>
        <taxon>Magnoliopsida</taxon>
        <taxon>eudicotyledons</taxon>
        <taxon>Gunneridae</taxon>
        <taxon>Pentapetalae</taxon>
        <taxon>rosids</taxon>
        <taxon>fabids</taxon>
        <taxon>Fabales</taxon>
        <taxon>Fabaceae</taxon>
        <taxon>Papilionoideae</taxon>
        <taxon>50 kb inversion clade</taxon>
        <taxon>NPAAA clade</taxon>
        <taxon>Hologalegina</taxon>
        <taxon>IRL clade</taxon>
        <taxon>Trifolieae</taxon>
        <taxon>Medicago</taxon>
    </lineage>
</organism>
<accession>G7JT50</accession>
<accession>A0A0C3X550</accession>
<accession>B7FI21</accession>
<accession>I3S1J5</accession>
<sequence>MMHLENTPTFHGFHMPAEWEPHSQCWIGWPERADNWRDGAVHAQLVFTRVAAAISRFEKVTVCASSAQWENARNQLPDHVRVVEISSNDSWFRDIGPTFVVRRETSKSDDAEHRIAGIDWTFNSWGGLEDGCYCDWSLDSLVKKKILDVERIPRFSHSMVLEGGSIHVDGEGTCITTEECLLNKNRNPHLSKSQIEDELKAYLGVRKVIWLPRGLYGDDDTNGHVDNMCCFVRPGAVLLSWTDDKTDPQYERSEEAYSLFSSVTDANGRKFEVIKLHVPGPLYMTEKEAAGVFQDDGAKPRLPGTRLAASYVNFYIANGAIIAPQFGDKKWDDEAIRVLSKTFPHHEVVGIEGSREIVLSGGNIHCITQQQPAI</sequence>
<comment type="function">
    <text evidence="2">Mediates the hydrolysis of agmatine into N-carbamoylputrescine in the arginine decarboxylase (ADC) pathway of putrescine biosynthesis, a basic polyamine.</text>
</comment>
<comment type="catalytic activity">
    <reaction evidence="2">
        <text>agmatine + H2O = N-carbamoylputrescine + NH4(+)</text>
        <dbReference type="Rhea" id="RHEA:18037"/>
        <dbReference type="ChEBI" id="CHEBI:15377"/>
        <dbReference type="ChEBI" id="CHEBI:28938"/>
        <dbReference type="ChEBI" id="CHEBI:58145"/>
        <dbReference type="ChEBI" id="CHEBI:58318"/>
        <dbReference type="EC" id="3.5.3.12"/>
    </reaction>
    <physiologicalReaction direction="left-to-right" evidence="2">
        <dbReference type="Rhea" id="RHEA:18038"/>
    </physiologicalReaction>
</comment>
<comment type="pathway">
    <text evidence="5">Amine and polyamine biosynthesis; putrescine biosynthesis via agmatine pathway; N-carbamoylputrescine from agmatine: step 1/1.</text>
</comment>
<comment type="subunit">
    <text evidence="3">Forms homodimers.</text>
</comment>
<comment type="similarity">
    <text evidence="5">Belongs to the agmatine deiminase family.</text>
</comment>
<proteinExistence type="evidence at protein level"/>
<feature type="chain" id="PRO_0000450243" description="Agmatine deiminase">
    <location>
        <begin position="1"/>
        <end position="374"/>
    </location>
</feature>
<feature type="active site" description="Amidino-cysteine intermediate" evidence="1">
    <location>
        <position position="366"/>
    </location>
</feature>
<feature type="binding site" evidence="3 8">
    <location>
        <position position="220"/>
    </location>
    <ligand>
        <name>agmatine</name>
        <dbReference type="ChEBI" id="CHEBI:58145"/>
    </ligand>
</feature>
<feature type="binding site" evidence="3 8">
    <location>
        <position position="226"/>
    </location>
    <ligand>
        <name>agmatine</name>
        <dbReference type="ChEBI" id="CHEBI:58145"/>
    </ligand>
</feature>
<feature type="sequence conflict" description="In Ref. 4; ACJ84400/AFK34137." evidence="5" ref="4">
    <original>R</original>
    <variation>G</variation>
    <location>
        <position position="102"/>
    </location>
</feature>
<feature type="sequence conflict" description="In Ref. 4; ACJ84400/AFK34137." evidence="5" ref="4">
    <original>E</original>
    <variation>G</variation>
    <location>
        <position position="150"/>
    </location>
</feature>
<feature type="sequence conflict" description="In Ref. 4; AFK34137." evidence="5" ref="4">
    <original>S</original>
    <variation>F</variation>
    <location>
        <position position="340"/>
    </location>
</feature>
<feature type="strand" evidence="9">
    <location>
        <begin position="22"/>
        <end position="27"/>
    </location>
</feature>
<feature type="turn" evidence="9">
    <location>
        <begin position="33"/>
        <end position="35"/>
    </location>
</feature>
<feature type="helix" evidence="9">
    <location>
        <begin position="37"/>
        <end position="40"/>
    </location>
</feature>
<feature type="helix" evidence="9">
    <location>
        <begin position="41"/>
        <end position="55"/>
    </location>
</feature>
<feature type="strand" evidence="9">
    <location>
        <begin position="58"/>
        <end position="64"/>
    </location>
</feature>
<feature type="helix" evidence="9">
    <location>
        <begin position="66"/>
        <end position="68"/>
    </location>
</feature>
<feature type="helix" evidence="9">
    <location>
        <begin position="69"/>
        <end position="75"/>
    </location>
</feature>
<feature type="strand" evidence="9">
    <location>
        <begin position="80"/>
        <end position="84"/>
    </location>
</feature>
<feature type="helix" evidence="9">
    <location>
        <begin position="92"/>
        <end position="95"/>
    </location>
</feature>
<feature type="strand" evidence="9">
    <location>
        <begin position="98"/>
        <end position="101"/>
    </location>
</feature>
<feature type="strand" evidence="9">
    <location>
        <begin position="115"/>
        <end position="121"/>
    </location>
</feature>
<feature type="turn" evidence="9">
    <location>
        <begin position="124"/>
        <end position="126"/>
    </location>
</feature>
<feature type="helix" evidence="10">
    <location>
        <begin position="127"/>
        <end position="130"/>
    </location>
</feature>
<feature type="helix" evidence="9">
    <location>
        <begin position="137"/>
        <end position="150"/>
    </location>
</feature>
<feature type="strand" evidence="9">
    <location>
        <begin position="154"/>
        <end position="160"/>
    </location>
</feature>
<feature type="helix" evidence="9">
    <location>
        <begin position="163"/>
        <end position="165"/>
    </location>
</feature>
<feature type="strand" evidence="9">
    <location>
        <begin position="166"/>
        <end position="168"/>
    </location>
</feature>
<feature type="strand" evidence="9">
    <location>
        <begin position="170"/>
        <end position="177"/>
    </location>
</feature>
<feature type="helix" evidence="9">
    <location>
        <begin position="178"/>
        <end position="181"/>
    </location>
</feature>
<feature type="turn" evidence="9">
    <location>
        <begin position="184"/>
        <end position="186"/>
    </location>
</feature>
<feature type="helix" evidence="9">
    <location>
        <begin position="192"/>
        <end position="203"/>
    </location>
</feature>
<feature type="strand" evidence="9">
    <location>
        <begin position="206"/>
        <end position="212"/>
    </location>
</feature>
<feature type="turn" evidence="9">
    <location>
        <begin position="219"/>
        <end position="222"/>
    </location>
</feature>
<feature type="helix" evidence="9">
    <location>
        <begin position="225"/>
        <end position="227"/>
    </location>
</feature>
<feature type="strand" evidence="9">
    <location>
        <begin position="229"/>
        <end position="233"/>
    </location>
</feature>
<feature type="strand" evidence="9">
    <location>
        <begin position="236"/>
        <end position="241"/>
    </location>
</feature>
<feature type="helix" evidence="9">
    <location>
        <begin position="249"/>
        <end position="260"/>
    </location>
</feature>
<feature type="strand" evidence="9">
    <location>
        <begin position="272"/>
        <end position="277"/>
    </location>
</feature>
<feature type="helix" evidence="9">
    <location>
        <begin position="286"/>
        <end position="290"/>
    </location>
</feature>
<feature type="strand" evidence="10">
    <location>
        <begin position="296"/>
        <end position="298"/>
    </location>
</feature>
<feature type="strand" evidence="9">
    <location>
        <begin position="315"/>
        <end position="317"/>
    </location>
</feature>
<feature type="strand" evidence="9">
    <location>
        <begin position="320"/>
        <end position="324"/>
    </location>
</feature>
<feature type="helix" evidence="9">
    <location>
        <begin position="329"/>
        <end position="342"/>
    </location>
</feature>
<feature type="strand" evidence="9">
    <location>
        <begin position="346"/>
        <end position="351"/>
    </location>
</feature>
<feature type="turn" evidence="9">
    <location>
        <begin position="352"/>
        <end position="354"/>
    </location>
</feature>
<feature type="helix" evidence="9">
    <location>
        <begin position="355"/>
        <end position="358"/>
    </location>
</feature>
<feature type="turn" evidence="9">
    <location>
        <begin position="359"/>
        <end position="361"/>
    </location>
</feature>
<feature type="helix" evidence="9">
    <location>
        <begin position="364"/>
        <end position="367"/>
    </location>
</feature>
<feature type="strand" evidence="9">
    <location>
        <begin position="368"/>
        <end position="372"/>
    </location>
</feature>
<protein>
    <recommendedName>
        <fullName evidence="5">Agmatine deiminase</fullName>
        <ecNumber evidence="2">3.5.3.12</ecNumber>
    </recommendedName>
    <alternativeName>
        <fullName evidence="4">Agmatine iminohydrolase</fullName>
        <shortName evidence="4">MtAIH</shortName>
    </alternativeName>
</protein>
<reference key="1">
    <citation type="journal article" date="2011" name="Nature">
        <title>The Medicago genome provides insight into the evolution of rhizobial symbioses.</title>
        <authorList>
            <person name="Young N.D."/>
            <person name="Debelle F."/>
            <person name="Oldroyd G.E.D."/>
            <person name="Geurts R."/>
            <person name="Cannon S.B."/>
            <person name="Udvardi M.K."/>
            <person name="Benedito V.A."/>
            <person name="Mayer K.F.X."/>
            <person name="Gouzy J."/>
            <person name="Schoof H."/>
            <person name="Van de Peer Y."/>
            <person name="Proost S."/>
            <person name="Cook D.R."/>
            <person name="Meyers B.C."/>
            <person name="Spannagl M."/>
            <person name="Cheung F."/>
            <person name="De Mita S."/>
            <person name="Krishnakumar V."/>
            <person name="Gundlach H."/>
            <person name="Zhou S."/>
            <person name="Mudge J."/>
            <person name="Bharti A.K."/>
            <person name="Murray J.D."/>
            <person name="Naoumkina M.A."/>
            <person name="Rosen B."/>
            <person name="Silverstein K.A.T."/>
            <person name="Tang H."/>
            <person name="Rombauts S."/>
            <person name="Zhao P.X."/>
            <person name="Zhou P."/>
            <person name="Barbe V."/>
            <person name="Bardou P."/>
            <person name="Bechner M."/>
            <person name="Bellec A."/>
            <person name="Berger A."/>
            <person name="Berges H."/>
            <person name="Bidwell S."/>
            <person name="Bisseling T."/>
            <person name="Choisne N."/>
            <person name="Couloux A."/>
            <person name="Denny R."/>
            <person name="Deshpande S."/>
            <person name="Dai X."/>
            <person name="Doyle J.J."/>
            <person name="Dudez A.-M."/>
            <person name="Farmer A.D."/>
            <person name="Fouteau S."/>
            <person name="Franken C."/>
            <person name="Gibelin C."/>
            <person name="Gish J."/>
            <person name="Goldstein S."/>
            <person name="Gonzalez A.J."/>
            <person name="Green P.J."/>
            <person name="Hallab A."/>
            <person name="Hartog M."/>
            <person name="Hua A."/>
            <person name="Humphray S.J."/>
            <person name="Jeong D.-H."/>
            <person name="Jing Y."/>
            <person name="Jocker A."/>
            <person name="Kenton S.M."/>
            <person name="Kim D.-J."/>
            <person name="Klee K."/>
            <person name="Lai H."/>
            <person name="Lang C."/>
            <person name="Lin S."/>
            <person name="Macmil S.L."/>
            <person name="Magdelenat G."/>
            <person name="Matthews L."/>
            <person name="McCorrison J."/>
            <person name="Monaghan E.L."/>
            <person name="Mun J.-H."/>
            <person name="Najar F.Z."/>
            <person name="Nicholson C."/>
            <person name="Noirot C."/>
            <person name="O'Bleness M."/>
            <person name="Paule C.R."/>
            <person name="Poulain J."/>
            <person name="Prion F."/>
            <person name="Qin B."/>
            <person name="Qu C."/>
            <person name="Retzel E.F."/>
            <person name="Riddle C."/>
            <person name="Sallet E."/>
            <person name="Samain S."/>
            <person name="Samson N."/>
            <person name="Sanders I."/>
            <person name="Saurat O."/>
            <person name="Scarpelli C."/>
            <person name="Schiex T."/>
            <person name="Segurens B."/>
            <person name="Severin A.J."/>
            <person name="Sherrier D.J."/>
            <person name="Shi R."/>
            <person name="Sims S."/>
            <person name="Singer S.R."/>
            <person name="Sinharoy S."/>
            <person name="Sterck L."/>
            <person name="Viollet A."/>
            <person name="Wang B.-B."/>
            <person name="Wang K."/>
            <person name="Wang M."/>
            <person name="Wang X."/>
            <person name="Warfsmann J."/>
            <person name="Weissenbach J."/>
            <person name="White D.D."/>
            <person name="White J.D."/>
            <person name="Wiley G.B."/>
            <person name="Wincker P."/>
            <person name="Xing Y."/>
            <person name="Yang L."/>
            <person name="Yao Z."/>
            <person name="Ying F."/>
            <person name="Zhai J."/>
            <person name="Zhou L."/>
            <person name="Zuber A."/>
            <person name="Denarie J."/>
            <person name="Dixon R.A."/>
            <person name="May G.D."/>
            <person name="Schwartz D.C."/>
            <person name="Rogers J."/>
            <person name="Quetier F."/>
            <person name="Town C.D."/>
            <person name="Roe B.A."/>
        </authorList>
    </citation>
    <scope>NUCLEOTIDE SEQUENCE [LARGE SCALE GENOMIC DNA]</scope>
    <source>
        <strain>cv. Jemalong A17</strain>
    </source>
</reference>
<reference key="2">
    <citation type="journal article" date="2014" name="BMC Genomics">
        <title>An improved genome release (version Mt4.0) for the model legume Medicago truncatula.</title>
        <authorList>
            <person name="Tang H."/>
            <person name="Krishnakumar V."/>
            <person name="Bidwell S."/>
            <person name="Rosen B."/>
            <person name="Chan A."/>
            <person name="Zhou S."/>
            <person name="Gentzbittel L."/>
            <person name="Childs K.L."/>
            <person name="Yandell M."/>
            <person name="Gundlach H."/>
            <person name="Mayer K.F."/>
            <person name="Schwartz D.C."/>
            <person name="Town C.D."/>
        </authorList>
    </citation>
    <scope>GENOME REANNOTATION</scope>
    <source>
        <strain>cv. Jemalong A17</strain>
    </source>
</reference>
<reference key="3">
    <citation type="journal article" date="2018" name="Nat. Plants">
        <title>Whole-genome landscape of Medicago truncatula symbiotic genes.</title>
        <authorList>
            <person name="Pecrix Y."/>
            <person name="Staton S.E."/>
            <person name="Sallet E."/>
            <person name="Lelandais-Briere C."/>
            <person name="Moreau S."/>
            <person name="Carrere S."/>
            <person name="Blein T."/>
            <person name="Jardinaud M.F."/>
            <person name="Latrasse D."/>
            <person name="Zouine M."/>
            <person name="Zahm M."/>
            <person name="Kreplak J."/>
            <person name="Mayjonade B."/>
            <person name="Satge C."/>
            <person name="Perez M."/>
            <person name="Cauet S."/>
            <person name="Marande W."/>
            <person name="Chantry-Darmon C."/>
            <person name="Lopez-Roques C."/>
            <person name="Bouchez O."/>
            <person name="Berard A."/>
            <person name="Debelle F."/>
            <person name="Munos S."/>
            <person name="Bendahmane A."/>
            <person name="Berges H."/>
            <person name="Niebel A."/>
            <person name="Buitink J."/>
            <person name="Frugier F."/>
            <person name="Benhamed M."/>
            <person name="Crespi M."/>
            <person name="Gouzy J."/>
            <person name="Gamas P."/>
        </authorList>
    </citation>
    <scope>NUCLEOTIDE SEQUENCE [LARGE SCALE GENOMIC DNA]</scope>
    <source>
        <strain>cv. Jemalong A17</strain>
    </source>
</reference>
<reference key="4">
    <citation type="submission" date="2008-12" db="EMBL/GenBank/DDBJ databases">
        <title>Medicago truncatula full length cdna cloning project.</title>
        <authorList>
            <person name="Moskal W."/>
            <person name="Chan A."/>
            <person name="Cheung F."/>
            <person name="Xiao Y."/>
            <person name="Town C.D."/>
        </authorList>
    </citation>
    <scope>NUCLEOTIDE SEQUENCE [LARGE SCALE MRNA]</scope>
</reference>
<reference key="5">
    <citation type="journal article" date="2019" name="Front. Plant Sci.">
        <title>Structural study of agmatine iminohydrolase from Medicago truncatula, the second enzyme of the agmatine route of putrescine biosynthesis in plants.</title>
        <authorList>
            <person name="Sekula B."/>
            <person name="Dauter Z."/>
        </authorList>
    </citation>
    <scope>X-RAY CRYSTALLOGRAPHY (1.20 ANGSTROMS) OF 11-374 IN COMPLEX WITH AGMATINE</scope>
    <scope>SUBUNIT</scope>
</reference>
<keyword id="KW-0002">3D-structure</keyword>
<keyword id="KW-0378">Hydrolase</keyword>
<keyword id="KW-0620">Polyamine biosynthesis</keyword>
<keyword id="KW-1185">Reference proteome</keyword>